<comment type="function">
    <text evidence="3">Glycosyltransferase that catalyze the transfer of GlcNAc from UDP-GlcNAc to the GlcNAcbeta1-2Manalpha1-3 arm of the core structure of N-linked glycans through a beta1-4 linkage and participates in the production of tri- and tetra-antennary N-linked sugar chains. Prefers complex-type N-glycans over hybrid-types. Has lower affinities for donors or acceptors than MGAT4A, suggesting that, under physiological conditions, it is not the main contributor in N-glycan biosynthesis.</text>
</comment>
<comment type="catalytic activity">
    <reaction evidence="3">
        <text>N(4)-{beta-D-GlcNAc-(1-&gt;2)-alpha-D-Man-(1-&gt;3)-[beta-D-GlcNAc-(1-&gt;2)-alpha-D-Man-(1-&gt;6)]-beta-D-Man-(1-&gt;4)-beta-D-GlcNAc-(1-&gt;4)-beta-D-GlcNAc}-L-asparaginyl-[protein] + UDP-N-acetyl-alpha-D-glucosamine = N(4)-{beta-D-GlcNAc-(1-&gt;2)-[beta-D-GlcNAc-(1-&gt;4)]-alpha-D-Man-(1-&gt;3)-[beta-D-GlcNAc-(1-&gt;2)-alpha-D-Man-(1-&gt;6)]-beta-D-Man-(1-&gt;4)-beta-D-GlcNAc-(1-&gt;4)-beta-D-GlcNAc}-L-asparaginyl-[protein] + UDP + H(+)</text>
        <dbReference type="Rhea" id="RHEA:16057"/>
        <dbReference type="Rhea" id="RHEA-COMP:13526"/>
        <dbReference type="Rhea" id="RHEA-COMP:14374"/>
        <dbReference type="ChEBI" id="CHEBI:15378"/>
        <dbReference type="ChEBI" id="CHEBI:57705"/>
        <dbReference type="ChEBI" id="CHEBI:58223"/>
        <dbReference type="ChEBI" id="CHEBI:60651"/>
        <dbReference type="ChEBI" id="CHEBI:139507"/>
        <dbReference type="EC" id="2.4.1.145"/>
    </reaction>
    <physiologicalReaction direction="left-to-right" evidence="3">
        <dbReference type="Rhea" id="RHEA:16058"/>
    </physiologicalReaction>
</comment>
<comment type="catalytic activity">
    <reaction evidence="3">
        <text>an N(4)-{beta-D-GlcNAc-(1-&gt;2)-alpha-D-Man-(1-&gt;3)-[alpha-D-Man-(1-&gt;6)]-beta-D-Man-(1-&gt;4)-beta-D-GlcNAc-(1-&gt;4)-beta-D-GlcNAc}-L-asparaginyl-[protein] + UDP-N-acetyl-alpha-D-glucosamine = an N(4)-{beta-D-GlcNAc-(1-&gt;2)-[beta-D-GlcNAc-(1-&gt;4)]-alpha-D-Man-(1-&gt;3)-[alpha-D-Man-(1-&gt;6)]-beta-D-Man-(1-&gt;4)-beta-D-GlcNAc-(1-&gt;4)-beta-D-GlcNAc}-L-asparaginyl-[protein] + UDP + H(+)</text>
        <dbReference type="Rhea" id="RHEA:69615"/>
        <dbReference type="Rhea" id="RHEA-COMP:14369"/>
        <dbReference type="Rhea" id="RHEA-COMP:17732"/>
        <dbReference type="ChEBI" id="CHEBI:15378"/>
        <dbReference type="ChEBI" id="CHEBI:57705"/>
        <dbReference type="ChEBI" id="CHEBI:58223"/>
        <dbReference type="ChEBI" id="CHEBI:60615"/>
        <dbReference type="ChEBI" id="CHEBI:187873"/>
    </reaction>
    <physiologicalReaction direction="left-to-right" evidence="3">
        <dbReference type="Rhea" id="RHEA:69616"/>
    </physiologicalReaction>
</comment>
<comment type="catalytic activity">
    <reaction evidence="3">
        <text>an N(4)-{beta-D-GlcNAc-(1-&gt;2)-alpha-D-Man-(1-&gt;3)-[beta-D-GlcNAc-(1-&gt;2)-[beta-D-GlcNAc-(1-&gt;6)]-alpha-D-Man-(1-&gt;6)]-beta-D-Man-(1-&gt;4)-beta-D-GlcNAc-(1-&gt;4)-beta-D-GlcNAc}-L-asparaginyl-[protein] + UDP-N-acetyl-alpha-D-glucosamine = an N(4)-{beta-D-GlcNAc-(1-&gt;2)-[beta-D-GlcNAc-(1-&gt;4)]-alpha-D-Man-(1-&gt;3)-[beta-D-GlcNAc-(1-&gt;2)-[beta-D-GlcNAc-(1-&gt;6)]-alpha-D-Man-(1-&gt;6)]-beta-D-Man-(1-&gt;4)-beta-D-GlcNAc-(1-&gt;4)-beta-D-GlcNAc}-L-asparaginyl-[protein] + UDP + H(+)</text>
        <dbReference type="Rhea" id="RHEA:69619"/>
        <dbReference type="Rhea" id="RHEA-COMP:17733"/>
        <dbReference type="Rhea" id="RHEA-COMP:17734"/>
        <dbReference type="ChEBI" id="CHEBI:15378"/>
        <dbReference type="ChEBI" id="CHEBI:57705"/>
        <dbReference type="ChEBI" id="CHEBI:58223"/>
        <dbReference type="ChEBI" id="CHEBI:187874"/>
        <dbReference type="ChEBI" id="CHEBI:187875"/>
    </reaction>
    <physiologicalReaction direction="left-to-right" evidence="3">
        <dbReference type="Rhea" id="RHEA:69620"/>
    </physiologicalReaction>
</comment>
<comment type="catalytic activity">
    <reaction evidence="3">
        <text>an N(4)-{beta-D-GlcNAc-(1-&gt;2)-alpha-D-Man-(1-&gt;3)-[beta-D-GlcNAc-(1-&gt;2)-alpha-D-Man-(1-&gt;6)]-beta-D-Man-(1-&gt;4)-beta-D-GlcNAc-(1-&gt;4)-[alpha-L-Fuc-(1-&gt;6)]-beta-D-GlcNAc}-L-asparaginyl-[protein] + UDP-N-acetyl-alpha-D-glucosamine = N(4)-{beta-D-GlcNAc-(1-&gt;2)-[beta-D-GlcNAc-(1-&gt;4)]-alpha-D-Man-(1-&gt;3)-[beta-D-GlcNAc-(1-&gt;2)-alpha-D-Man-(1-&gt;6)]-beta-D-Man-(1-&gt;4)-beta-D-GlcNAc-(1-&gt;4)-[alpha-L-Fuc-(1-&gt;6)]-beta-D-GlcNAc}-asparaginyl-[protein] + UDP + H(+)</text>
        <dbReference type="Rhea" id="RHEA:69623"/>
        <dbReference type="Rhea" id="RHEA-COMP:13532"/>
        <dbReference type="Rhea" id="RHEA-COMP:18198"/>
        <dbReference type="ChEBI" id="CHEBI:15378"/>
        <dbReference type="ChEBI" id="CHEBI:57705"/>
        <dbReference type="ChEBI" id="CHEBI:58223"/>
        <dbReference type="ChEBI" id="CHEBI:137207"/>
        <dbReference type="ChEBI" id="CHEBI:187877"/>
    </reaction>
    <physiologicalReaction direction="left-to-right" evidence="3">
        <dbReference type="Rhea" id="RHEA:69624"/>
    </physiologicalReaction>
</comment>
<comment type="catalytic activity">
    <reaction evidence="3">
        <text>an N(4)-{beta-D-GlcNAc-(1-&gt;2)-alpha-D-Man-(1-&gt;3)-[beta-D-Gal-(1-&gt;4)-beta-D-GlcNAc-(1-&gt;2)-alpha-D-Man-(1-&gt;6)]-beta-D-Man-(1-&gt;4)-beta-D-GlcNAc-(1-&gt;4)-beta-D-GlcNAc}-L-asparaginyl-[protein] + UDP-N-acetyl-alpha-D-glucosamine = an N(4)-{beta-D-GlcNAc-(1-&gt;2)-[beta-D-GlcNAc-(1-&gt;4)]-alpha-D-Man-(1-&gt;3)-[beta-D-Gal-(1-&gt;4)-beta-D-GlcNAc-(1-&gt;2)-alpha-D-Man-(1-&gt;6)]-beta-D-Man-(1-&gt;4)-beta-D-GlcNAc-(1-&gt;4)-beta-D-GlcNAc}-L-asparaginyl-[protein] + UDP + H(+)</text>
        <dbReference type="Rhea" id="RHEA:69627"/>
        <dbReference type="Rhea" id="RHEA-COMP:17737"/>
        <dbReference type="Rhea" id="RHEA-COMP:17738"/>
        <dbReference type="ChEBI" id="CHEBI:15378"/>
        <dbReference type="ChEBI" id="CHEBI:57705"/>
        <dbReference type="ChEBI" id="CHEBI:58223"/>
        <dbReference type="ChEBI" id="CHEBI:187878"/>
        <dbReference type="ChEBI" id="CHEBI:187879"/>
    </reaction>
    <physiologicalReaction direction="left-to-right" evidence="3">
        <dbReference type="Rhea" id="RHEA:69628"/>
    </physiologicalReaction>
</comment>
<comment type="catalytic activity">
    <reaction evidence="3">
        <text>N(4)-{beta-D-GlcNAc-(1-&gt;2)-alpha-D-Man-(1-&gt;3)-[alpha-D-Man-(1-&gt;3)-{alpha-D-Man-(1-&gt;6)}-alpha-D-Man-(1-&gt;6)]-beta-D-Man-(1-&gt;4)-beta-D-GlcNAc-(1-&gt;4)-beta-D-GlcNAc}-asparaginyl-[protein] + UDP-N-acetyl-alpha-D-glucosamine = N(4)-{beta-D-GlcNAc-(1-&gt;2)-[beta-D-GlcNAc-(1-&gt;4)]-alpha-D-Man-(1-&gt;3)-[alpha-D-Man-(1-&gt;3)-{alpha-D-Man-(1-&gt;6)}-alpha-D-Man-(1-&gt;6)]-beta-D-Man-(1-&gt;4)-beta-D-GlcNAc-(1-&gt;4)-beta-D-GlcNAc}-asparaginyl-[protein] + UDP + H(+)</text>
        <dbReference type="Rhea" id="RHEA:69631"/>
        <dbReference type="Rhea" id="RHEA-COMP:17739"/>
        <dbReference type="Rhea" id="RHEA-COMP:17740"/>
        <dbReference type="ChEBI" id="CHEBI:15378"/>
        <dbReference type="ChEBI" id="CHEBI:57705"/>
        <dbReference type="ChEBI" id="CHEBI:58223"/>
        <dbReference type="ChEBI" id="CHEBI:187880"/>
        <dbReference type="ChEBI" id="CHEBI:187881"/>
    </reaction>
    <physiologicalReaction direction="left-to-right" evidence="3">
        <dbReference type="Rhea" id="RHEA:69632"/>
    </physiologicalReaction>
</comment>
<comment type="catalytic activity">
    <reaction evidence="3">
        <text>N(4)-{beta-D-GlcNAc-(1-&gt;2)-alpha-D-Man-(1-&gt;3)-beta-D-Man-(1-&gt;4)-beta-D-GlcNAc-(1-&gt;4)-beta-D-GlcNAc}-asparaginyl-[protein] + UDP-N-acetyl-alpha-D-glucosamine = N(4)-{beta-D-GlcNAc-(1-&gt;2)-[beta-D-GlcNAc-(1-&gt;4)]-alpha-D-Man-(1-&gt;3)-beta-D-Man-(1-&gt;4)-beta-D-GlcNAc-(1-&gt;4)-beta-D-GlcNAc}-asparaginyl-[protein] + UDP + H(+)</text>
        <dbReference type="Rhea" id="RHEA:69635"/>
        <dbReference type="Rhea" id="RHEA-COMP:17741"/>
        <dbReference type="Rhea" id="RHEA-COMP:17742"/>
        <dbReference type="ChEBI" id="CHEBI:15378"/>
        <dbReference type="ChEBI" id="CHEBI:57705"/>
        <dbReference type="ChEBI" id="CHEBI:58223"/>
        <dbReference type="ChEBI" id="CHEBI:187882"/>
        <dbReference type="ChEBI" id="CHEBI:187883"/>
    </reaction>
    <physiologicalReaction direction="left-to-right" evidence="3">
        <dbReference type="Rhea" id="RHEA:69636"/>
    </physiologicalReaction>
</comment>
<comment type="cofactor">
    <cofactor evidence="1">
        <name>a divalent metal cation</name>
        <dbReference type="ChEBI" id="CHEBI:60240"/>
    </cofactor>
</comment>
<comment type="pathway">
    <text evidence="3">Protein modification; protein glycosylation.</text>
</comment>
<comment type="subcellular location">
    <subcellularLocation>
        <location evidence="2">Golgi apparatus membrane</location>
        <topology evidence="2">Single-pass type II membrane protein</topology>
    </subcellularLocation>
    <text evidence="3">A processed soluble form also exists.</text>
</comment>
<comment type="PTM">
    <text evidence="3">N-glycosylated.</text>
</comment>
<comment type="similarity">
    <text evidence="5">Belongs to the glycosyltransferase 54 family.</text>
</comment>
<reference key="1">
    <citation type="submission" date="2004-06" db="EMBL/GenBank/DDBJ databases">
        <authorList>
            <consortium name="NIH - Zebrafish Gene Collection (ZGC) project"/>
        </authorList>
    </citation>
    <scope>NUCLEOTIDE SEQUENCE [LARGE SCALE MRNA]</scope>
</reference>
<sequence length="547" mass="62991">MRLRNGTFLTVLLFGLCGLISLSWYTAFSNSKGNVVDIYQREFLALRDRLHSAEQENLKRSKELNLVLDEIKRAIAEKQALRDINRTWSSLSDETKLKLWNVTSSKNVLQLPSIFHHLPHLLAKESSLQPAVHIGQGRTGVSIVLGVPSVKREVHSYLTDTLSSLMTELSPAEKEDCVIVVFIAETDQQYANSVADNLKRLFPGEIQSGLLEIISPSVHFYPDFSHLKESFGDPKERVRWRTKQNLDYCFLMMYAQTKGNYYVQLEDDIVARPNYFTTMKNFALQQPSEEWMILEFSQLGFIGKMFKSLDLPLIVEFMLMFYKDKPIDWLLDHIMWVKVCNPEKDAKHCDRQKANLRIRFKPSLFQHVGTHSSLAGKIQKLKDKDFGKQTLHKGHANPLAEVTTSLKTYQHFTLEKAYLGEDFFWAFTPVAGDFIRIRFFTPVRVERYFFRSGNIEHPGDKLFNTTVEVLPFDNIQSEKEALKEGREKTPKYQRTEDGFIRIGKFENGIAEGEVDASFGPLEALRLSVLTDSPVWVILSEIFIKKAE</sequence>
<dbReference type="EC" id="2.4.1.145" evidence="3"/>
<dbReference type="EMBL" id="BC074045">
    <property type="protein sequence ID" value="AAH74045.1"/>
    <property type="molecule type" value="mRNA"/>
</dbReference>
<dbReference type="RefSeq" id="NP_001002180.1">
    <property type="nucleotide sequence ID" value="NM_001002180.1"/>
</dbReference>
<dbReference type="SMR" id="Q6GMK0"/>
<dbReference type="FunCoup" id="Q6GMK0">
    <property type="interactions" value="2934"/>
</dbReference>
<dbReference type="STRING" id="7955.ENSDARP00000000748"/>
<dbReference type="CAZy" id="GT54">
    <property type="family name" value="Glycosyltransferase Family 54"/>
</dbReference>
<dbReference type="GlyCosmos" id="Q6GMK0">
    <property type="glycosylation" value="3 sites, No reported glycans"/>
</dbReference>
<dbReference type="PaxDb" id="7955-ENSDARP00000000748"/>
<dbReference type="Ensembl" id="ENSDART00000001159">
    <property type="protein sequence ID" value="ENSDARP00000000748"/>
    <property type="gene ID" value="ENSDARG00000004115"/>
</dbReference>
<dbReference type="GeneID" id="431727"/>
<dbReference type="KEGG" id="dre:431727"/>
<dbReference type="AGR" id="ZFIN:ZDB-GENE-040704-19"/>
<dbReference type="CTD" id="11282"/>
<dbReference type="ZFIN" id="ZDB-GENE-040704-19">
    <property type="gene designation" value="mgat4b"/>
</dbReference>
<dbReference type="eggNOG" id="ENOG502QPQJ">
    <property type="taxonomic scope" value="Eukaryota"/>
</dbReference>
<dbReference type="HOGENOM" id="CLU_027046_3_0_1"/>
<dbReference type="InParanoid" id="Q6GMK0"/>
<dbReference type="OMA" id="FLMFHND"/>
<dbReference type="OrthoDB" id="2016523at2759"/>
<dbReference type="PhylomeDB" id="Q6GMK0"/>
<dbReference type="TreeFam" id="TF324570"/>
<dbReference type="Reactome" id="R-DRE-975577">
    <property type="pathway name" value="N-Glycan antennae elongation"/>
</dbReference>
<dbReference type="UniPathway" id="UPA00378"/>
<dbReference type="PRO" id="PR:Q6GMK0"/>
<dbReference type="Proteomes" id="UP000000437">
    <property type="component" value="Chromosome 14"/>
</dbReference>
<dbReference type="Bgee" id="ENSDARG00000004115">
    <property type="expression patterns" value="Expressed in mature ovarian follicle and 20 other cell types or tissues"/>
</dbReference>
<dbReference type="GO" id="GO:0005783">
    <property type="term" value="C:endoplasmic reticulum"/>
    <property type="evidence" value="ECO:0000318"/>
    <property type="project" value="GO_Central"/>
</dbReference>
<dbReference type="GO" id="GO:0005793">
    <property type="term" value="C:endoplasmic reticulum-Golgi intermediate compartment"/>
    <property type="evidence" value="ECO:0000318"/>
    <property type="project" value="GO_Central"/>
</dbReference>
<dbReference type="GO" id="GO:0000139">
    <property type="term" value="C:Golgi membrane"/>
    <property type="evidence" value="ECO:0007669"/>
    <property type="project" value="UniProtKB-SubCell"/>
</dbReference>
<dbReference type="GO" id="GO:0005795">
    <property type="term" value="C:Golgi stack"/>
    <property type="evidence" value="ECO:0000318"/>
    <property type="project" value="GO_Central"/>
</dbReference>
<dbReference type="GO" id="GO:0008375">
    <property type="term" value="F:acetylglucosaminyltransferase activity"/>
    <property type="evidence" value="ECO:0000318"/>
    <property type="project" value="GO_Central"/>
</dbReference>
<dbReference type="GO" id="GO:0008454">
    <property type="term" value="F:alpha-1,3-mannosylglycoprotein 4-beta-N-acetylglucosaminyltransferase activity"/>
    <property type="evidence" value="ECO:0000250"/>
    <property type="project" value="UniProtKB"/>
</dbReference>
<dbReference type="GO" id="GO:0046872">
    <property type="term" value="F:metal ion binding"/>
    <property type="evidence" value="ECO:0007669"/>
    <property type="project" value="UniProtKB-KW"/>
</dbReference>
<dbReference type="GO" id="GO:0006486">
    <property type="term" value="P:protein glycosylation"/>
    <property type="evidence" value="ECO:0000250"/>
    <property type="project" value="UniProtKB"/>
</dbReference>
<dbReference type="GO" id="GO:0006487">
    <property type="term" value="P:protein N-linked glycosylation"/>
    <property type="evidence" value="ECO:0000318"/>
    <property type="project" value="GO_Central"/>
</dbReference>
<dbReference type="InterPro" id="IPR006759">
    <property type="entry name" value="Glyco_transf_54"/>
</dbReference>
<dbReference type="InterPro" id="IPR056576">
    <property type="entry name" value="MGAT4_A/B/C_C"/>
</dbReference>
<dbReference type="PANTHER" id="PTHR12062:SF1">
    <property type="entry name" value="ALPHA-1,3-MANNOSYL-GLYCOPROTEIN 4-BETA-N-ACETYLGLUCOSAMINYLTRANSFERASE B"/>
    <property type="match status" value="1"/>
</dbReference>
<dbReference type="PANTHER" id="PTHR12062">
    <property type="entry name" value="N-ACETYLGLUCOSAMINYLTRANSFERASE VI"/>
    <property type="match status" value="1"/>
</dbReference>
<dbReference type="Pfam" id="PF04666">
    <property type="entry name" value="MGAT4_cons"/>
    <property type="match status" value="1"/>
</dbReference>
<dbReference type="Pfam" id="PF23524">
    <property type="entry name" value="MGAT4A_C"/>
    <property type="match status" value="1"/>
</dbReference>
<gene>
    <name type="primary">mgat4bQ9UQ53</name>
    <name type="ORF">zgc:92425</name>
</gene>
<keyword id="KW-0175">Coiled coil</keyword>
<keyword id="KW-0325">Glycoprotein</keyword>
<keyword id="KW-0328">Glycosyltransferase</keyword>
<keyword id="KW-0333">Golgi apparatus</keyword>
<keyword id="KW-0472">Membrane</keyword>
<keyword id="KW-0479">Metal-binding</keyword>
<keyword id="KW-1185">Reference proteome</keyword>
<keyword id="KW-0735">Signal-anchor</keyword>
<keyword id="KW-0808">Transferase</keyword>
<keyword id="KW-0812">Transmembrane</keyword>
<keyword id="KW-1133">Transmembrane helix</keyword>
<feature type="chain" id="PRO_0000288595" description="Alpha-1,3-mannosyl-glycoprotein 4-beta-N-acetylglucosaminyltransferase B">
    <location>
        <begin position="1"/>
        <end position="547"/>
    </location>
</feature>
<feature type="topological domain" description="Cytoplasmic" evidence="4">
    <location>
        <begin position="1"/>
        <end position="7"/>
    </location>
</feature>
<feature type="transmembrane region" description="Helical; Signal-anchor for type II membrane protein" evidence="4">
    <location>
        <begin position="8"/>
        <end position="28"/>
    </location>
</feature>
<feature type="topological domain" description="Lumenal" evidence="4">
    <location>
        <begin position="29"/>
        <end position="547"/>
    </location>
</feature>
<feature type="coiled-coil region" evidence="4">
    <location>
        <begin position="36"/>
        <end position="83"/>
    </location>
</feature>
<feature type="glycosylation site" description="N-linked (GlcNAc...) asparagine" evidence="4">
    <location>
        <position position="85"/>
    </location>
</feature>
<feature type="glycosylation site" description="N-linked (GlcNAc...) asparagine" evidence="4">
    <location>
        <position position="101"/>
    </location>
</feature>
<feature type="glycosylation site" description="N-linked (GlcNAc...) asparagine" evidence="4">
    <location>
        <position position="464"/>
    </location>
</feature>
<evidence type="ECO:0000250" key="1">
    <source>
        <dbReference type="UniProtKB" id="O77836"/>
    </source>
</evidence>
<evidence type="ECO:0000250" key="2">
    <source>
        <dbReference type="UniProtKB" id="Q9D4R2"/>
    </source>
</evidence>
<evidence type="ECO:0000250" key="3">
    <source>
        <dbReference type="UniProtKB" id="Q9UQ53"/>
    </source>
</evidence>
<evidence type="ECO:0000255" key="4"/>
<evidence type="ECO:0000305" key="5"/>
<protein>
    <recommendedName>
        <fullName evidence="3">Alpha-1,3-mannosyl-glycoprotein 4-beta-N-acetylglucosaminyltransferase B</fullName>
        <ecNumber evidence="3">2.4.1.145</ecNumber>
    </recommendedName>
    <alternativeName>
        <fullName>N-glycosyl-oligosaccharide-glycoprotein N-acetylglucosaminyltransferase IVb</fullName>
        <shortName>GlcNAc-T IVb</shortName>
        <shortName>GnT-IVb</shortName>
        <shortName>N-acetylglucosaminyltransferase IVb</shortName>
    </alternativeName>
    <alternativeName>
        <fullName>UDP-N-acetylglucosamine: alpha-1,3-D-mannoside beta-1,4-N-acetylglucosaminyltransferase IVb</fullName>
    </alternativeName>
</protein>
<organism>
    <name type="scientific">Danio rerio</name>
    <name type="common">Zebrafish</name>
    <name type="synonym">Brachydanio rerio</name>
    <dbReference type="NCBI Taxonomy" id="7955"/>
    <lineage>
        <taxon>Eukaryota</taxon>
        <taxon>Metazoa</taxon>
        <taxon>Chordata</taxon>
        <taxon>Craniata</taxon>
        <taxon>Vertebrata</taxon>
        <taxon>Euteleostomi</taxon>
        <taxon>Actinopterygii</taxon>
        <taxon>Neopterygii</taxon>
        <taxon>Teleostei</taxon>
        <taxon>Ostariophysi</taxon>
        <taxon>Cypriniformes</taxon>
        <taxon>Danionidae</taxon>
        <taxon>Danioninae</taxon>
        <taxon>Danio</taxon>
    </lineage>
</organism>
<accession>Q6GMK0</accession>
<proteinExistence type="evidence at transcript level"/>
<name>MGT4B_DANRE</name>